<gene>
    <name type="primary">specc1l</name>
    <name type="synonym">cytsa</name>
    <name type="ORF">GSTENG00021593001</name>
</gene>
<dbReference type="EMBL" id="AY884300">
    <property type="protein sequence ID" value="AAX84191.1"/>
    <property type="molecule type" value="mRNA"/>
</dbReference>
<dbReference type="EMBL" id="CAAE01014692">
    <property type="protein sequence ID" value="CAG02469.1"/>
    <property type="status" value="ALT_SEQ"/>
    <property type="molecule type" value="Genomic_DNA"/>
</dbReference>
<dbReference type="SMR" id="Q2KN95"/>
<dbReference type="FunCoup" id="Q2KN95">
    <property type="interactions" value="882"/>
</dbReference>
<dbReference type="Ensembl" id="ENSTNIT00000014588.1">
    <property type="protein sequence ID" value="ENSTNIP00000014389.1"/>
    <property type="gene ID" value="ENSTNIG00000011443.1"/>
</dbReference>
<dbReference type="KEGG" id="tng:GSTEN00021593G001"/>
<dbReference type="GeneTree" id="ENSGT00940000153592"/>
<dbReference type="HOGENOM" id="CLU_009328_1_0_1"/>
<dbReference type="InParanoid" id="Q2KN95"/>
<dbReference type="OMA" id="CITSCEH"/>
<dbReference type="OrthoDB" id="21607at2759"/>
<dbReference type="TreeFam" id="TF316716"/>
<dbReference type="Proteomes" id="UP000007303">
    <property type="component" value="Unassembled WGS sequence"/>
</dbReference>
<dbReference type="GO" id="GO:0005737">
    <property type="term" value="C:cytoplasm"/>
    <property type="evidence" value="ECO:0007669"/>
    <property type="project" value="UniProtKB-KW"/>
</dbReference>
<dbReference type="GO" id="GO:0005921">
    <property type="term" value="C:gap junction"/>
    <property type="evidence" value="ECO:0007669"/>
    <property type="project" value="UniProtKB-SubCell"/>
</dbReference>
<dbReference type="GO" id="GO:0005819">
    <property type="term" value="C:spindle"/>
    <property type="evidence" value="ECO:0007669"/>
    <property type="project" value="UniProtKB-SubCell"/>
</dbReference>
<dbReference type="GO" id="GO:0051301">
    <property type="term" value="P:cell division"/>
    <property type="evidence" value="ECO:0007669"/>
    <property type="project" value="UniProtKB-KW"/>
</dbReference>
<dbReference type="GO" id="GO:0060325">
    <property type="term" value="P:face morphogenesis"/>
    <property type="evidence" value="ECO:0007669"/>
    <property type="project" value="Ensembl"/>
</dbReference>
<dbReference type="CDD" id="cd21199">
    <property type="entry name" value="CH_CYTS"/>
    <property type="match status" value="1"/>
</dbReference>
<dbReference type="FunFam" id="1.10.418.10:FF:000020">
    <property type="entry name" value="Cytospin-A isoform 1"/>
    <property type="match status" value="1"/>
</dbReference>
<dbReference type="Gene3D" id="1.10.418.10">
    <property type="entry name" value="Calponin-like domain"/>
    <property type="match status" value="1"/>
</dbReference>
<dbReference type="InterPro" id="IPR001715">
    <property type="entry name" value="CH_dom"/>
</dbReference>
<dbReference type="InterPro" id="IPR036872">
    <property type="entry name" value="CH_dom_sf"/>
</dbReference>
<dbReference type="InterPro" id="IPR050540">
    <property type="entry name" value="F-actin_Monoox_Mical"/>
</dbReference>
<dbReference type="PANTHER" id="PTHR23167">
    <property type="entry name" value="CALPONIN HOMOLOGY DOMAIN-CONTAINING PROTEIN DDB_G0272472-RELATED"/>
    <property type="match status" value="1"/>
</dbReference>
<dbReference type="PANTHER" id="PTHR23167:SF18">
    <property type="entry name" value="CYTOSPIN-A"/>
    <property type="match status" value="1"/>
</dbReference>
<dbReference type="Pfam" id="PF00307">
    <property type="entry name" value="CH"/>
    <property type="match status" value="1"/>
</dbReference>
<dbReference type="SMART" id="SM00033">
    <property type="entry name" value="CH"/>
    <property type="match status" value="1"/>
</dbReference>
<dbReference type="SUPFAM" id="SSF47576">
    <property type="entry name" value="Calponin-homology domain, CH-domain"/>
    <property type="match status" value="1"/>
</dbReference>
<dbReference type="PROSITE" id="PS50021">
    <property type="entry name" value="CH"/>
    <property type="match status" value="1"/>
</dbReference>
<comment type="function">
    <text evidence="1">Involved in cytokinesis and spindle organization. May play a role in actin cytoskeleton organization and microtubule stabilization and hence required for proper cell adhesion and migration (By similarity).</text>
</comment>
<comment type="subunit">
    <text evidence="1">May interact with both microtubules and actin cytoskeleton.</text>
</comment>
<comment type="subcellular location">
    <subcellularLocation>
        <location evidence="1">Cytoplasm</location>
        <location evidence="1">Cytoskeleton</location>
    </subcellularLocation>
    <subcellularLocation>
        <location evidence="1">Cytoplasm</location>
        <location evidence="1">Cytoskeleton</location>
        <location evidence="1">Spindle</location>
    </subcellularLocation>
    <subcellularLocation>
        <location evidence="1">Cell junction</location>
        <location evidence="1">Gap junction</location>
    </subcellularLocation>
    <text evidence="1">Colocalizes with beta-tubulin, acetylated alpha-tubulin and F-actin. Also observed in a ring around gamma-tubulin containing centrioles possibly in the microtubule organizing center (By similarity).</text>
</comment>
<comment type="similarity">
    <text evidence="5">Belongs to the cytospin-A family.</text>
</comment>
<comment type="sequence caution" evidence="5">
    <conflict type="erroneous gene model prediction">
        <sequence resource="EMBL-CDS" id="CAG02469"/>
    </conflict>
</comment>
<proteinExistence type="evidence at transcript level"/>
<accession>Q2KN95</accession>
<accession>Q4SA63</accession>
<feature type="chain" id="PRO_0000231025" description="Cytospin-A">
    <location>
        <begin position="1"/>
        <end position="1113"/>
    </location>
</feature>
<feature type="domain" description="Calponin-homology (CH)" evidence="3">
    <location>
        <begin position="1007"/>
        <end position="1112"/>
    </location>
</feature>
<feature type="region of interest" description="Disordered" evidence="4">
    <location>
        <begin position="1"/>
        <end position="160"/>
    </location>
</feature>
<feature type="region of interest" description="Disordered" evidence="4">
    <location>
        <begin position="284"/>
        <end position="374"/>
    </location>
</feature>
<feature type="region of interest" description="Disordered" evidence="4">
    <location>
        <begin position="766"/>
        <end position="785"/>
    </location>
</feature>
<feature type="region of interest" description="Disordered" evidence="4">
    <location>
        <begin position="832"/>
        <end position="902"/>
    </location>
</feature>
<feature type="region of interest" description="Disordered" evidence="4">
    <location>
        <begin position="914"/>
        <end position="957"/>
    </location>
</feature>
<feature type="region of interest" description="Disordered" evidence="4">
    <location>
        <begin position="972"/>
        <end position="997"/>
    </location>
</feature>
<feature type="coiled-coil region" evidence="2">
    <location>
        <begin position="220"/>
        <end position="259"/>
    </location>
</feature>
<feature type="coiled-coil region" evidence="2">
    <location>
        <begin position="379"/>
        <end position="433"/>
    </location>
</feature>
<feature type="coiled-coil region" evidence="2">
    <location>
        <begin position="473"/>
        <end position="791"/>
    </location>
</feature>
<feature type="compositionally biased region" description="Polar residues" evidence="4">
    <location>
        <begin position="59"/>
        <end position="103"/>
    </location>
</feature>
<feature type="compositionally biased region" description="Basic and acidic residues" evidence="4">
    <location>
        <begin position="145"/>
        <end position="154"/>
    </location>
</feature>
<feature type="compositionally biased region" description="Low complexity" evidence="4">
    <location>
        <begin position="338"/>
        <end position="358"/>
    </location>
</feature>
<feature type="compositionally biased region" description="Low complexity" evidence="4">
    <location>
        <begin position="834"/>
        <end position="845"/>
    </location>
</feature>
<feature type="compositionally biased region" description="Pro residues" evidence="4">
    <location>
        <begin position="856"/>
        <end position="867"/>
    </location>
</feature>
<feature type="compositionally biased region" description="Polar residues" evidence="4">
    <location>
        <begin position="925"/>
        <end position="940"/>
    </location>
</feature>
<feature type="compositionally biased region" description="Basic and acidic residues" evidence="4">
    <location>
        <begin position="941"/>
        <end position="951"/>
    </location>
</feature>
<feature type="compositionally biased region" description="Low complexity" evidence="4">
    <location>
        <begin position="972"/>
        <end position="981"/>
    </location>
</feature>
<sequence length="1113" mass="122034">MKKSVRPAASKVSGERGKPEVAGNAAAGKPASKSSTAAPLSKVKSSDDLLAAMAGGNPASCNAVSKSKRTTSVGTTASTLDSKPKTASGTTSKRLASSLSKETNLTRDRLRTSRASANKKQSAAGPVGGDAASGKRSRGQTLAESEGRMSKSKSDGQISDKVALETKVKDLLGLAKSKDVEILHLRSELRDMRAQLGLGGEEPQEGAVEEEKPHVSAITAADVESTLILLQEQNQAIREELNLLKSENRMLKDRLNALGFSLEQRLDGSDKLFSYASLSPDLAAGSGQSDGGGTGTLASSVEGSAPGSLEDLLTGHQHGGSADNLDSESSEVYQAVTSSDDALDAPSGASSSSESECAPSRERSRRGSSGNASEVSVACLTERIHQMEENQHSTAEELQATLQELADLQQITQELNGENERLGEEKVILMDSLCQQSDKLELYGRQIEYLRSLLDEHHVSYVLEEDIKSGRYMELEQRYADLAENGRFEREQLLGVQQHLSNTLKMAEQDNAEAQEMIGALKERNHQMERIMESERQGRAAVEATLEEYKEVASSDQAELSRCRAQLEQERQRVAELYSLHTAGDKNDICQLLEGVRLGKEEAEAKAAKLQEGLEQAHGELSHLRETFSKLDREYREFQEQAQQQMGEQERALEKQRLDLQEKETEVADMKETIFELEDEVEQHRALKLHDNLIITDLENSVKKLQDQKHDMEREIKILHRRLREESMEWRQFQADLQTAVVIANDIKSEAQEEIGDLRRRLQEAQEKNEKLSKELEEVKSRKQDEERGRVYNYMNAVERDLAALRQGMGLSRRSSTSSEPSPTVKTLIKSFDSASQGPPSSGASVTPTASAAPLPRTPLSPSPMKTPPAAAVSPIQRHSVSGSMSAAKPLSSLGDKRPTYPDISLPAEHLLRGSAAGRPPSALQRVSNMDSTKAISVSRRSSEEMKRDMAAPDGASSASLMAMSAASSPLALASSSPTASVTPTTRSRLREERKDPLSALAREYGGSKRNALLKWCQKKTEGYQNIDITNFSSSWNDGLAFCAVLHTYLPAHIPYQELTSQEKRRNFTLAFQAAESVGIKCTLDINEMVHTERPDWQSVMTYVTAIYKYFET</sequence>
<organism>
    <name type="scientific">Tetraodon nigroviridis</name>
    <name type="common">Spotted green pufferfish</name>
    <name type="synonym">Chelonodon nigroviridis</name>
    <dbReference type="NCBI Taxonomy" id="99883"/>
    <lineage>
        <taxon>Eukaryota</taxon>
        <taxon>Metazoa</taxon>
        <taxon>Chordata</taxon>
        <taxon>Craniata</taxon>
        <taxon>Vertebrata</taxon>
        <taxon>Euteleostomi</taxon>
        <taxon>Actinopterygii</taxon>
        <taxon>Neopterygii</taxon>
        <taxon>Teleostei</taxon>
        <taxon>Neoteleostei</taxon>
        <taxon>Acanthomorphata</taxon>
        <taxon>Eupercaria</taxon>
        <taxon>Tetraodontiformes</taxon>
        <taxon>Tetradontoidea</taxon>
        <taxon>Tetraodontidae</taxon>
        <taxon>Tetraodon</taxon>
    </lineage>
</organism>
<protein>
    <recommendedName>
        <fullName>Cytospin-A</fullName>
    </recommendedName>
    <alternativeName>
        <fullName>SPECC1-like protein</fullName>
    </alternativeName>
    <alternativeName>
        <fullName>Sperm antigen with calponin homology and coiled-coil domains 1-like</fullName>
    </alternativeName>
</protein>
<keyword id="KW-0131">Cell cycle</keyword>
<keyword id="KW-0132">Cell division</keyword>
<keyword id="KW-0965">Cell junction</keyword>
<keyword id="KW-0175">Coiled coil</keyword>
<keyword id="KW-0963">Cytoplasm</keyword>
<keyword id="KW-0206">Cytoskeleton</keyword>
<keyword id="KW-0303">Gap junction</keyword>
<keyword id="KW-1185">Reference proteome</keyword>
<name>CYTSA_TETNG</name>
<evidence type="ECO:0000250" key="1"/>
<evidence type="ECO:0000255" key="2"/>
<evidence type="ECO:0000255" key="3">
    <source>
        <dbReference type="PROSITE-ProRule" id="PRU00044"/>
    </source>
</evidence>
<evidence type="ECO:0000256" key="4">
    <source>
        <dbReference type="SAM" id="MobiDB-lite"/>
    </source>
</evidence>
<evidence type="ECO:0000305" key="5"/>
<reference key="1">
    <citation type="submission" date="2005-01" db="EMBL/GenBank/DDBJ databases">
        <title>Characterization of cytospin A as a multiple coiled coil protein involved in cytokinesis and spindle organization.</title>
        <authorList>
            <person name="Huang C.-H."/>
            <person name="Ye T."/>
            <person name="Chen Y."/>
        </authorList>
    </citation>
    <scope>NUCLEOTIDE SEQUENCE [MRNA]</scope>
</reference>
<reference key="2">
    <citation type="journal article" date="2004" name="Nature">
        <title>Genome duplication in the teleost fish Tetraodon nigroviridis reveals the early vertebrate proto-karyotype.</title>
        <authorList>
            <person name="Jaillon O."/>
            <person name="Aury J.-M."/>
            <person name="Brunet F."/>
            <person name="Petit J.-L."/>
            <person name="Stange-Thomann N."/>
            <person name="Mauceli E."/>
            <person name="Bouneau L."/>
            <person name="Fischer C."/>
            <person name="Ozouf-Costaz C."/>
            <person name="Bernot A."/>
            <person name="Nicaud S."/>
            <person name="Jaffe D."/>
            <person name="Fisher S."/>
            <person name="Lutfalla G."/>
            <person name="Dossat C."/>
            <person name="Segurens B."/>
            <person name="Dasilva C."/>
            <person name="Salanoubat M."/>
            <person name="Levy M."/>
            <person name="Boudet N."/>
            <person name="Castellano S."/>
            <person name="Anthouard V."/>
            <person name="Jubin C."/>
            <person name="Castelli V."/>
            <person name="Katinka M."/>
            <person name="Vacherie B."/>
            <person name="Biemont C."/>
            <person name="Skalli Z."/>
            <person name="Cattolico L."/>
            <person name="Poulain J."/>
            <person name="De Berardinis V."/>
            <person name="Cruaud C."/>
            <person name="Duprat S."/>
            <person name="Brottier P."/>
            <person name="Coutanceau J.-P."/>
            <person name="Gouzy J."/>
            <person name="Parra G."/>
            <person name="Lardier G."/>
            <person name="Chapple C."/>
            <person name="McKernan K.J."/>
            <person name="McEwan P."/>
            <person name="Bosak S."/>
            <person name="Kellis M."/>
            <person name="Volff J.-N."/>
            <person name="Guigo R."/>
            <person name="Zody M.C."/>
            <person name="Mesirov J."/>
            <person name="Lindblad-Toh K."/>
            <person name="Birren B."/>
            <person name="Nusbaum C."/>
            <person name="Kahn D."/>
            <person name="Robinson-Rechavi M."/>
            <person name="Laudet V."/>
            <person name="Schachter V."/>
            <person name="Quetier F."/>
            <person name="Saurin W."/>
            <person name="Scarpelli C."/>
            <person name="Wincker P."/>
            <person name="Lander E.S."/>
            <person name="Weissenbach J."/>
            <person name="Roest Crollius H."/>
        </authorList>
    </citation>
    <scope>NUCLEOTIDE SEQUENCE [LARGE SCALE GENOMIC DNA]</scope>
</reference>